<evidence type="ECO:0000255" key="1">
    <source>
        <dbReference type="HAMAP-Rule" id="MF_01572"/>
    </source>
</evidence>
<name>Y429_STRR6</name>
<accession>Q8DQY6</accession>
<feature type="chain" id="PRO_0000260815" description="UPF0397 protein spr0429">
    <location>
        <begin position="1"/>
        <end position="182"/>
    </location>
</feature>
<feature type="transmembrane region" description="Helical" evidence="1">
    <location>
        <begin position="10"/>
        <end position="30"/>
    </location>
</feature>
<feature type="transmembrane region" description="Helical" evidence="1">
    <location>
        <begin position="46"/>
        <end position="66"/>
    </location>
</feature>
<feature type="transmembrane region" description="Helical" evidence="1">
    <location>
        <begin position="73"/>
        <end position="93"/>
    </location>
</feature>
<feature type="transmembrane region" description="Helical" evidence="1">
    <location>
        <begin position="109"/>
        <end position="129"/>
    </location>
</feature>
<feature type="transmembrane region" description="Helical" evidence="1">
    <location>
        <begin position="148"/>
        <end position="168"/>
    </location>
</feature>
<comment type="subcellular location">
    <subcellularLocation>
        <location evidence="1">Cell membrane</location>
        <topology evidence="1">Multi-pass membrane protein</topology>
    </subcellularLocation>
</comment>
<comment type="similarity">
    <text evidence="1">Belongs to the UPF0397 family.</text>
</comment>
<sequence length="182" mass="19343">MEIKFTIKQVVAVGIGAALFVVIGMINIPTPVPNTSIQLQYAVQALLSIIFGPIIGLLVGLIGHAIKDSLVGYGLWWTWIIASGLFGLVVGLFRKYVRVINGVFDWKDILIFNLIQLLANALVWGVLAPLGDVVIYQEAAEKVFAQGIVAGIANGVSVAIAGTLLLLAYAGTQTRAGSLKKD</sequence>
<gene>
    <name type="ordered locus">spr0429</name>
</gene>
<reference key="1">
    <citation type="journal article" date="2001" name="J. Bacteriol.">
        <title>Genome of the bacterium Streptococcus pneumoniae strain R6.</title>
        <authorList>
            <person name="Hoskins J."/>
            <person name="Alborn W.E. Jr."/>
            <person name="Arnold J."/>
            <person name="Blaszczak L.C."/>
            <person name="Burgett S."/>
            <person name="DeHoff B.S."/>
            <person name="Estrem S.T."/>
            <person name="Fritz L."/>
            <person name="Fu D.-J."/>
            <person name="Fuller W."/>
            <person name="Geringer C."/>
            <person name="Gilmour R."/>
            <person name="Glass J.S."/>
            <person name="Khoja H."/>
            <person name="Kraft A.R."/>
            <person name="Lagace R.E."/>
            <person name="LeBlanc D.J."/>
            <person name="Lee L.N."/>
            <person name="Lefkowitz E.J."/>
            <person name="Lu J."/>
            <person name="Matsushima P."/>
            <person name="McAhren S.M."/>
            <person name="McHenney M."/>
            <person name="McLeaster K."/>
            <person name="Mundy C.W."/>
            <person name="Nicas T.I."/>
            <person name="Norris F.H."/>
            <person name="O'Gara M."/>
            <person name="Peery R.B."/>
            <person name="Robertson G.T."/>
            <person name="Rockey P."/>
            <person name="Sun P.-M."/>
            <person name="Winkler M.E."/>
            <person name="Yang Y."/>
            <person name="Young-Bellido M."/>
            <person name="Zhao G."/>
            <person name="Zook C.A."/>
            <person name="Baltz R.H."/>
            <person name="Jaskunas S.R."/>
            <person name="Rosteck P.R. Jr."/>
            <person name="Skatrud P.L."/>
            <person name="Glass J.I."/>
        </authorList>
    </citation>
    <scope>NUCLEOTIDE SEQUENCE [LARGE SCALE GENOMIC DNA]</scope>
    <source>
        <strain>ATCC BAA-255 / R6</strain>
    </source>
</reference>
<organism>
    <name type="scientific">Streptococcus pneumoniae (strain ATCC BAA-255 / R6)</name>
    <dbReference type="NCBI Taxonomy" id="171101"/>
    <lineage>
        <taxon>Bacteria</taxon>
        <taxon>Bacillati</taxon>
        <taxon>Bacillota</taxon>
        <taxon>Bacilli</taxon>
        <taxon>Lactobacillales</taxon>
        <taxon>Streptococcaceae</taxon>
        <taxon>Streptococcus</taxon>
    </lineage>
</organism>
<proteinExistence type="inferred from homology"/>
<dbReference type="EMBL" id="AE007317">
    <property type="protein sequence ID" value="AAK99233.1"/>
    <property type="molecule type" value="Genomic_DNA"/>
</dbReference>
<dbReference type="PIR" id="E97925">
    <property type="entry name" value="E97925"/>
</dbReference>
<dbReference type="RefSeq" id="NP_358023.1">
    <property type="nucleotide sequence ID" value="NC_003098.1"/>
</dbReference>
<dbReference type="RefSeq" id="WP_000403169.1">
    <property type="nucleotide sequence ID" value="NC_003098.1"/>
</dbReference>
<dbReference type="STRING" id="171101.spr0429"/>
<dbReference type="KEGG" id="spr:spr0429"/>
<dbReference type="PATRIC" id="fig|171101.6.peg.471"/>
<dbReference type="eggNOG" id="COG4720">
    <property type="taxonomic scope" value="Bacteria"/>
</dbReference>
<dbReference type="HOGENOM" id="CLU_120023_0_0_9"/>
<dbReference type="Proteomes" id="UP000000586">
    <property type="component" value="Chromosome"/>
</dbReference>
<dbReference type="GO" id="GO:0005886">
    <property type="term" value="C:plasma membrane"/>
    <property type="evidence" value="ECO:0007669"/>
    <property type="project" value="UniProtKB-SubCell"/>
</dbReference>
<dbReference type="Gene3D" id="1.10.1760.20">
    <property type="match status" value="1"/>
</dbReference>
<dbReference type="HAMAP" id="MF_01572">
    <property type="entry name" value="UPF0397"/>
    <property type="match status" value="1"/>
</dbReference>
<dbReference type="InterPro" id="IPR009825">
    <property type="entry name" value="ECF_substrate-spec-like"/>
</dbReference>
<dbReference type="InterPro" id="IPR022914">
    <property type="entry name" value="UPF0397"/>
</dbReference>
<dbReference type="NCBIfam" id="NF010182">
    <property type="entry name" value="PRK13661.1"/>
    <property type="match status" value="1"/>
</dbReference>
<dbReference type="PANTHER" id="PTHR37815">
    <property type="entry name" value="UPF0397 PROTEIN BC_2624-RELATED"/>
    <property type="match status" value="1"/>
</dbReference>
<dbReference type="PANTHER" id="PTHR37815:SF3">
    <property type="entry name" value="UPF0397 PROTEIN SPR0429"/>
    <property type="match status" value="1"/>
</dbReference>
<dbReference type="Pfam" id="PF07155">
    <property type="entry name" value="ECF-ribofla_trS"/>
    <property type="match status" value="1"/>
</dbReference>
<protein>
    <recommendedName>
        <fullName evidence="1">UPF0397 protein spr0429</fullName>
    </recommendedName>
</protein>
<keyword id="KW-1003">Cell membrane</keyword>
<keyword id="KW-0472">Membrane</keyword>
<keyword id="KW-1185">Reference proteome</keyword>
<keyword id="KW-0812">Transmembrane</keyword>
<keyword id="KW-1133">Transmembrane helix</keyword>